<sequence length="434" mass="49717">MAATDIARQVGEGCRTVPLAGHVGFDSLPDQLVNKSVSQGFCFNILCVGETGLGKSTLMDTLFNTKFEGEPATHTQPGVQLQSNTYDLQESNVRLKLTIVSTVGFGDQINKEDSYKPIVEFIDAQFEAYLQEELKIRRVLHTYHDSRIHVCLYFIAPTGHSLKSLDLVTMKKLDSKVNIIPIIAKADAISKSELTKFKIKITSELVSNGVQIYQFPTDDESVAEINGTMNAHLPFAVIGSTEELKIGNKMMRARQYPWGTVQVENEAHCDFVKLREMLIRVNMEDLREQTHTRHYELYRRCKLEEMGFKDTDPDSKPFSLQETYEAKRNEFLGELQKKEEEMRQMFVQRVKEKEAELKEAEKELHEKFDRLKKLHQDEKKKLEDKKKSLDDEVNAFKQRKTAAELLQSQGSQAGGSQTLKRDKEKKNNPWLCTE</sequence>
<feature type="initiator methionine" description="Removed" evidence="5 21">
    <location>
        <position position="1"/>
    </location>
</feature>
<feature type="chain" id="PRO_0000173525" description="Septin-6">
    <location>
        <begin position="2"/>
        <end position="434"/>
    </location>
</feature>
<feature type="domain" description="Septin-type G" evidence="3">
    <location>
        <begin position="39"/>
        <end position="305"/>
    </location>
</feature>
<feature type="region of interest" description="G1 motif" evidence="3">
    <location>
        <begin position="49"/>
        <end position="56"/>
    </location>
</feature>
<feature type="region of interest" description="G3 motif" evidence="3">
    <location>
        <begin position="101"/>
        <end position="104"/>
    </location>
</feature>
<feature type="region of interest" description="G4 motif" evidence="3">
    <location>
        <begin position="184"/>
        <end position="187"/>
    </location>
</feature>
<feature type="region of interest" description="Disordered" evidence="4">
    <location>
        <begin position="405"/>
        <end position="434"/>
    </location>
</feature>
<feature type="coiled-coil region" evidence="2">
    <location>
        <begin position="321"/>
        <end position="409"/>
    </location>
</feature>
<feature type="compositionally biased region" description="Low complexity" evidence="4">
    <location>
        <begin position="407"/>
        <end position="417"/>
    </location>
</feature>
<feature type="binding site" evidence="10">
    <location>
        <begin position="49"/>
        <end position="56"/>
    </location>
    <ligand>
        <name>GTP</name>
        <dbReference type="ChEBI" id="CHEBI:37565"/>
    </ligand>
</feature>
<feature type="binding site" evidence="1">
    <location>
        <position position="104"/>
    </location>
    <ligand>
        <name>GTP</name>
        <dbReference type="ChEBI" id="CHEBI:37565"/>
    </ligand>
</feature>
<feature type="binding site" evidence="10">
    <location>
        <begin position="185"/>
        <end position="193"/>
    </location>
    <ligand>
        <name>GTP</name>
        <dbReference type="ChEBI" id="CHEBI:37565"/>
    </ligand>
</feature>
<feature type="binding site" evidence="1">
    <location>
        <position position="239"/>
    </location>
    <ligand>
        <name>GTP</name>
        <dbReference type="ChEBI" id="CHEBI:37565"/>
    </ligand>
</feature>
<feature type="binding site" evidence="1">
    <location>
        <position position="254"/>
    </location>
    <ligand>
        <name>GTP</name>
        <dbReference type="ChEBI" id="CHEBI:37565"/>
    </ligand>
</feature>
<feature type="modified residue" description="N-acetylalanine" evidence="5 21">
    <location>
        <position position="2"/>
    </location>
</feature>
<feature type="modified residue" description="Phosphoserine" evidence="23">
    <location>
        <position position="27"/>
    </location>
</feature>
<feature type="modified residue" description="N6-acetyllysine" evidence="22">
    <location>
        <position position="367"/>
    </location>
</feature>
<feature type="modified residue" description="Phosphoserine" evidence="23">
    <location>
        <position position="416"/>
    </location>
</feature>
<feature type="modified residue" description="Phosphothreonine" evidence="23">
    <location>
        <position position="418"/>
    </location>
</feature>
<feature type="splice variant" id="VSP_006051" description="In isoform IV." evidence="15">
    <original>VENEA</original>
    <variation>AAREV</variation>
    <location>
        <begin position="263"/>
        <end position="267"/>
    </location>
</feature>
<feature type="splice variant" id="VSP_006052" description="In isoform IV." evidence="15">
    <location>
        <begin position="268"/>
        <end position="434"/>
    </location>
</feature>
<feature type="splice variant" id="VSP_006053" description="In isoform I." evidence="15 17">
    <location>
        <begin position="428"/>
        <end position="434"/>
    </location>
</feature>
<feature type="splice variant" id="VSP_006054" description="In isoform V." evidence="15 16">
    <original>NPWLCTE</original>
    <variation>FF</variation>
    <location>
        <begin position="428"/>
        <end position="434"/>
    </location>
</feature>
<feature type="sequence conflict" description="In Ref. 3; AAH09291." evidence="18" ref="3">
    <original>L</original>
    <variation>P</variation>
    <location>
        <position position="406"/>
    </location>
</feature>
<feature type="strand" evidence="24">
    <location>
        <begin position="42"/>
        <end position="48"/>
    </location>
</feature>
<feature type="helix" evidence="24">
    <location>
        <begin position="55"/>
        <end position="63"/>
    </location>
</feature>
<feature type="strand" evidence="24">
    <location>
        <begin position="80"/>
        <end position="87"/>
    </location>
</feature>
<feature type="strand" evidence="24">
    <location>
        <begin position="96"/>
        <end position="104"/>
    </location>
</feature>
<feature type="strand" evidence="24">
    <location>
        <begin position="108"/>
        <end position="110"/>
    </location>
</feature>
<feature type="helix" evidence="24">
    <location>
        <begin position="115"/>
        <end position="133"/>
    </location>
</feature>
<feature type="helix" evidence="24">
    <location>
        <begin position="140"/>
        <end position="142"/>
    </location>
</feature>
<feature type="strand" evidence="24">
    <location>
        <begin position="150"/>
        <end position="155"/>
    </location>
</feature>
<feature type="strand" evidence="24">
    <location>
        <begin position="159"/>
        <end position="161"/>
    </location>
</feature>
<feature type="helix" evidence="24">
    <location>
        <begin position="164"/>
        <end position="172"/>
    </location>
</feature>
<feature type="turn" evidence="24">
    <location>
        <begin position="173"/>
        <end position="176"/>
    </location>
</feature>
<feature type="strand" evidence="24">
    <location>
        <begin position="179"/>
        <end position="185"/>
    </location>
</feature>
<feature type="helix" evidence="24">
    <location>
        <begin position="186"/>
        <end position="188"/>
    </location>
</feature>
<feature type="helix" evidence="24">
    <location>
        <begin position="191"/>
        <end position="207"/>
    </location>
</feature>
<feature type="helix" evidence="24">
    <location>
        <begin position="220"/>
        <end position="222"/>
    </location>
</feature>
<feature type="helix" evidence="24">
    <location>
        <begin position="223"/>
        <end position="231"/>
    </location>
</feature>
<feature type="strand" evidence="24">
    <location>
        <begin position="234"/>
        <end position="236"/>
    </location>
</feature>
<feature type="strand" evidence="24">
    <location>
        <begin position="243"/>
        <end position="246"/>
    </location>
</feature>
<feature type="strand" evidence="24">
    <location>
        <begin position="249"/>
        <end position="256"/>
    </location>
</feature>
<feature type="strand" evidence="24">
    <location>
        <begin position="259"/>
        <end position="262"/>
    </location>
</feature>
<feature type="turn" evidence="24">
    <location>
        <begin position="266"/>
        <end position="268"/>
    </location>
</feature>
<feature type="helix" evidence="24">
    <location>
        <begin position="271"/>
        <end position="275"/>
    </location>
</feature>
<feature type="helix" evidence="24">
    <location>
        <begin position="280"/>
        <end position="292"/>
    </location>
</feature>
<feature type="helix" evidence="24">
    <location>
        <begin position="294"/>
        <end position="304"/>
    </location>
</feature>
<feature type="helix" evidence="25">
    <location>
        <begin position="347"/>
        <end position="396"/>
    </location>
</feature>
<accession>Q14141</accession>
<accession>Q5JTK0</accession>
<accession>Q969W5</accession>
<accession>Q96A13</accession>
<accession>Q96GR1</accession>
<accession>Q96P86</accession>
<accession>Q96P87</accession>
<reference key="1">
    <citation type="journal article" date="2002" name="Cancer Res.">
        <title>SEPTIN6, a human homologue to mouse Septin6, is fused to MLL in infant acute myeloid leukemia with complex chromosomal abnormalities involving 11q23 and Xq24.</title>
        <authorList>
            <person name="Ono R."/>
            <person name="Taki T."/>
            <person name="Taketani T."/>
            <person name="Kawaguchi H."/>
            <person name="Taniwaki M."/>
            <person name="Okamura T."/>
            <person name="Kawa K."/>
            <person name="Hanada R."/>
            <person name="Kobayashi M."/>
            <person name="Hayashi Y."/>
        </authorList>
    </citation>
    <scope>NUCLEOTIDE SEQUENCE [MRNA] (ISOFORMS I; II; IV AND V)</scope>
</reference>
<reference key="2">
    <citation type="journal article" date="2005" name="Nature">
        <title>The DNA sequence of the human X chromosome.</title>
        <authorList>
            <person name="Ross M.T."/>
            <person name="Grafham D.V."/>
            <person name="Coffey A.J."/>
            <person name="Scherer S."/>
            <person name="McLay K."/>
            <person name="Muzny D."/>
            <person name="Platzer M."/>
            <person name="Howell G.R."/>
            <person name="Burrows C."/>
            <person name="Bird C.P."/>
            <person name="Frankish A."/>
            <person name="Lovell F.L."/>
            <person name="Howe K.L."/>
            <person name="Ashurst J.L."/>
            <person name="Fulton R.S."/>
            <person name="Sudbrak R."/>
            <person name="Wen G."/>
            <person name="Jones M.C."/>
            <person name="Hurles M.E."/>
            <person name="Andrews T.D."/>
            <person name="Scott C.E."/>
            <person name="Searle S."/>
            <person name="Ramser J."/>
            <person name="Whittaker A."/>
            <person name="Deadman R."/>
            <person name="Carter N.P."/>
            <person name="Hunt S.E."/>
            <person name="Chen R."/>
            <person name="Cree A."/>
            <person name="Gunaratne P."/>
            <person name="Havlak P."/>
            <person name="Hodgson A."/>
            <person name="Metzker M.L."/>
            <person name="Richards S."/>
            <person name="Scott G."/>
            <person name="Steffen D."/>
            <person name="Sodergren E."/>
            <person name="Wheeler D.A."/>
            <person name="Worley K.C."/>
            <person name="Ainscough R."/>
            <person name="Ambrose K.D."/>
            <person name="Ansari-Lari M.A."/>
            <person name="Aradhya S."/>
            <person name="Ashwell R.I."/>
            <person name="Babbage A.K."/>
            <person name="Bagguley C.L."/>
            <person name="Ballabio A."/>
            <person name="Banerjee R."/>
            <person name="Barker G.E."/>
            <person name="Barlow K.F."/>
            <person name="Barrett I.P."/>
            <person name="Bates K.N."/>
            <person name="Beare D.M."/>
            <person name="Beasley H."/>
            <person name="Beasley O."/>
            <person name="Beck A."/>
            <person name="Bethel G."/>
            <person name="Blechschmidt K."/>
            <person name="Brady N."/>
            <person name="Bray-Allen S."/>
            <person name="Bridgeman A.M."/>
            <person name="Brown A.J."/>
            <person name="Brown M.J."/>
            <person name="Bonnin D."/>
            <person name="Bruford E.A."/>
            <person name="Buhay C."/>
            <person name="Burch P."/>
            <person name="Burford D."/>
            <person name="Burgess J."/>
            <person name="Burrill W."/>
            <person name="Burton J."/>
            <person name="Bye J.M."/>
            <person name="Carder C."/>
            <person name="Carrel L."/>
            <person name="Chako J."/>
            <person name="Chapman J.C."/>
            <person name="Chavez D."/>
            <person name="Chen E."/>
            <person name="Chen G."/>
            <person name="Chen Y."/>
            <person name="Chen Z."/>
            <person name="Chinault C."/>
            <person name="Ciccodicola A."/>
            <person name="Clark S.Y."/>
            <person name="Clarke G."/>
            <person name="Clee C.M."/>
            <person name="Clegg S."/>
            <person name="Clerc-Blankenburg K."/>
            <person name="Clifford K."/>
            <person name="Cobley V."/>
            <person name="Cole C.G."/>
            <person name="Conquer J.S."/>
            <person name="Corby N."/>
            <person name="Connor R.E."/>
            <person name="David R."/>
            <person name="Davies J."/>
            <person name="Davis C."/>
            <person name="Davis J."/>
            <person name="Delgado O."/>
            <person name="Deshazo D."/>
            <person name="Dhami P."/>
            <person name="Ding Y."/>
            <person name="Dinh H."/>
            <person name="Dodsworth S."/>
            <person name="Draper H."/>
            <person name="Dugan-Rocha S."/>
            <person name="Dunham A."/>
            <person name="Dunn M."/>
            <person name="Durbin K.J."/>
            <person name="Dutta I."/>
            <person name="Eades T."/>
            <person name="Ellwood M."/>
            <person name="Emery-Cohen A."/>
            <person name="Errington H."/>
            <person name="Evans K.L."/>
            <person name="Faulkner L."/>
            <person name="Francis F."/>
            <person name="Frankland J."/>
            <person name="Fraser A.E."/>
            <person name="Galgoczy P."/>
            <person name="Gilbert J."/>
            <person name="Gill R."/>
            <person name="Gloeckner G."/>
            <person name="Gregory S.G."/>
            <person name="Gribble S."/>
            <person name="Griffiths C."/>
            <person name="Grocock R."/>
            <person name="Gu Y."/>
            <person name="Gwilliam R."/>
            <person name="Hamilton C."/>
            <person name="Hart E.A."/>
            <person name="Hawes A."/>
            <person name="Heath P.D."/>
            <person name="Heitmann K."/>
            <person name="Hennig S."/>
            <person name="Hernandez J."/>
            <person name="Hinzmann B."/>
            <person name="Ho S."/>
            <person name="Hoffs M."/>
            <person name="Howden P.J."/>
            <person name="Huckle E.J."/>
            <person name="Hume J."/>
            <person name="Hunt P.J."/>
            <person name="Hunt A.R."/>
            <person name="Isherwood J."/>
            <person name="Jacob L."/>
            <person name="Johnson D."/>
            <person name="Jones S."/>
            <person name="de Jong P.J."/>
            <person name="Joseph S.S."/>
            <person name="Keenan S."/>
            <person name="Kelly S."/>
            <person name="Kershaw J.K."/>
            <person name="Khan Z."/>
            <person name="Kioschis P."/>
            <person name="Klages S."/>
            <person name="Knights A.J."/>
            <person name="Kosiura A."/>
            <person name="Kovar-Smith C."/>
            <person name="Laird G.K."/>
            <person name="Langford C."/>
            <person name="Lawlor S."/>
            <person name="Leversha M."/>
            <person name="Lewis L."/>
            <person name="Liu W."/>
            <person name="Lloyd C."/>
            <person name="Lloyd D.M."/>
            <person name="Loulseged H."/>
            <person name="Loveland J.E."/>
            <person name="Lovell J.D."/>
            <person name="Lozado R."/>
            <person name="Lu J."/>
            <person name="Lyne R."/>
            <person name="Ma J."/>
            <person name="Maheshwari M."/>
            <person name="Matthews L.H."/>
            <person name="McDowall J."/>
            <person name="McLaren S."/>
            <person name="McMurray A."/>
            <person name="Meidl P."/>
            <person name="Meitinger T."/>
            <person name="Milne S."/>
            <person name="Miner G."/>
            <person name="Mistry S.L."/>
            <person name="Morgan M."/>
            <person name="Morris S."/>
            <person name="Mueller I."/>
            <person name="Mullikin J.C."/>
            <person name="Nguyen N."/>
            <person name="Nordsiek G."/>
            <person name="Nyakatura G."/>
            <person name="O'dell C.N."/>
            <person name="Okwuonu G."/>
            <person name="Palmer S."/>
            <person name="Pandian R."/>
            <person name="Parker D."/>
            <person name="Parrish J."/>
            <person name="Pasternak S."/>
            <person name="Patel D."/>
            <person name="Pearce A.V."/>
            <person name="Pearson D.M."/>
            <person name="Pelan S.E."/>
            <person name="Perez L."/>
            <person name="Porter K.M."/>
            <person name="Ramsey Y."/>
            <person name="Reichwald K."/>
            <person name="Rhodes S."/>
            <person name="Ridler K.A."/>
            <person name="Schlessinger D."/>
            <person name="Schueler M.G."/>
            <person name="Sehra H.K."/>
            <person name="Shaw-Smith C."/>
            <person name="Shen H."/>
            <person name="Sheridan E.M."/>
            <person name="Shownkeen R."/>
            <person name="Skuce C.D."/>
            <person name="Smith M.L."/>
            <person name="Sotheran E.C."/>
            <person name="Steingruber H.E."/>
            <person name="Steward C.A."/>
            <person name="Storey R."/>
            <person name="Swann R.M."/>
            <person name="Swarbreck D."/>
            <person name="Tabor P.E."/>
            <person name="Taudien S."/>
            <person name="Taylor T."/>
            <person name="Teague B."/>
            <person name="Thomas K."/>
            <person name="Thorpe A."/>
            <person name="Timms K."/>
            <person name="Tracey A."/>
            <person name="Trevanion S."/>
            <person name="Tromans A.C."/>
            <person name="d'Urso M."/>
            <person name="Verduzco D."/>
            <person name="Villasana D."/>
            <person name="Waldron L."/>
            <person name="Wall M."/>
            <person name="Wang Q."/>
            <person name="Warren J."/>
            <person name="Warry G.L."/>
            <person name="Wei X."/>
            <person name="West A."/>
            <person name="Whitehead S.L."/>
            <person name="Whiteley M.N."/>
            <person name="Wilkinson J.E."/>
            <person name="Willey D.L."/>
            <person name="Williams G."/>
            <person name="Williams L."/>
            <person name="Williamson A."/>
            <person name="Williamson H."/>
            <person name="Wilming L."/>
            <person name="Woodmansey R.L."/>
            <person name="Wray P.W."/>
            <person name="Yen J."/>
            <person name="Zhang J."/>
            <person name="Zhou J."/>
            <person name="Zoghbi H."/>
            <person name="Zorilla S."/>
            <person name="Buck D."/>
            <person name="Reinhardt R."/>
            <person name="Poustka A."/>
            <person name="Rosenthal A."/>
            <person name="Lehrach H."/>
            <person name="Meindl A."/>
            <person name="Minx P.J."/>
            <person name="Hillier L.W."/>
            <person name="Willard H.F."/>
            <person name="Wilson R.K."/>
            <person name="Waterston R.H."/>
            <person name="Rice C.M."/>
            <person name="Vaudin M."/>
            <person name="Coulson A."/>
            <person name="Nelson D.L."/>
            <person name="Weinstock G."/>
            <person name="Sulston J.E."/>
            <person name="Durbin R.M."/>
            <person name="Hubbard T."/>
            <person name="Gibbs R.A."/>
            <person name="Beck S."/>
            <person name="Rogers J."/>
            <person name="Bentley D.R."/>
        </authorList>
    </citation>
    <scope>NUCLEOTIDE SEQUENCE [LARGE SCALE GENOMIC DNA]</scope>
</reference>
<reference key="3">
    <citation type="journal article" date="2004" name="Genome Res.">
        <title>The status, quality, and expansion of the NIH full-length cDNA project: the Mammalian Gene Collection (MGC).</title>
        <authorList>
            <consortium name="The MGC Project Team"/>
        </authorList>
    </citation>
    <scope>NUCLEOTIDE SEQUENCE [LARGE SCALE MRNA] (ISOFORMS II AND V)</scope>
    <source>
        <tissue>Muscle</tissue>
        <tissue>Placenta</tissue>
        <tissue>Testis</tissue>
    </source>
</reference>
<reference key="4">
    <citation type="journal article" date="2003" name="Nat. Biotechnol.">
        <title>Exploring proteomes and analyzing protein processing by mass spectrometric identification of sorted N-terminal peptides.</title>
        <authorList>
            <person name="Gevaert K."/>
            <person name="Goethals M."/>
            <person name="Martens L."/>
            <person name="Van Damme J."/>
            <person name="Staes A."/>
            <person name="Thomas G.R."/>
            <person name="Vandekerckhove J."/>
        </authorList>
    </citation>
    <scope>PROTEIN SEQUENCE OF 2-8</scope>
    <scope>ACETYLATION AT ALA-2</scope>
    <source>
        <tissue>Platelet</tissue>
    </source>
</reference>
<reference key="5">
    <citation type="journal article" date="1995" name="DNA Res.">
        <title>Prediction of the coding sequences of unidentified human genes. IV. The coding sequences of 40 new genes (KIAA0121-KIAA0160) deduced by analysis of cDNA clones from human cell line KG-1.</title>
        <authorList>
            <person name="Nagase T."/>
            <person name="Seki N."/>
            <person name="Tanaka A."/>
            <person name="Ishikawa K."/>
            <person name="Nomura N."/>
        </authorList>
    </citation>
    <scope>NUCLEOTIDE SEQUENCE [LARGE SCALE MRNA] OF 4-427 (ISOFORM I)</scope>
    <source>
        <tissue>Bone marrow</tissue>
    </source>
</reference>
<reference key="6">
    <citation type="journal article" date="2005" name="J. Pathol.">
        <title>Expression profiling the human septin gene family.</title>
        <authorList>
            <person name="Hall P.A."/>
            <person name="Jung K."/>
            <person name="Hillan K.J."/>
            <person name="Russell S.E.H."/>
        </authorList>
    </citation>
    <scope>TISSUE SPECIFICITY</scope>
</reference>
<reference key="7">
    <citation type="journal article" date="2005" name="Mol. Biol. Cell">
        <title>Mammalian septins regulate microtubule stability through interaction with the microtubule-binding protein MAP4.</title>
        <authorList>
            <person name="Kremer B.E."/>
            <person name="Haystead T."/>
            <person name="Macara I.G."/>
        </authorList>
    </citation>
    <scope>COORDINATED EXPRESSION WITH SEPTIN2 AND SEPTIN7</scope>
</reference>
<reference key="8">
    <citation type="journal article" date="2005" name="Science">
        <title>A mitotic septin scaffold required for mammalian chromosome congression and segregation.</title>
        <authorList>
            <person name="Spiliotis E.T."/>
            <person name="Kinoshita M."/>
            <person name="Nelson W.J."/>
        </authorList>
    </citation>
    <scope>SUBCELLULAR LOCATION</scope>
</reference>
<reference key="9">
    <citation type="journal article" date="2006" name="J. Biol. Chem.">
        <title>Structural analysis of septin 2, 6, and 7 complexes.</title>
        <authorList>
            <person name="Low C."/>
            <person name="Macara I.G."/>
        </authorList>
    </citation>
    <scope>INTERACTION WITH SEPTIN2 AND SEPTIN7</scope>
</reference>
<reference key="10">
    <citation type="journal article" date="2007" name="Cell">
        <title>Septins regulate actin organization and cell-cycle arrest through nuclear accumulation of NCK mediated by SOCS7.</title>
        <authorList>
            <person name="Kremer B.E."/>
            <person name="Adang L.A."/>
            <person name="Macara I.G."/>
        </authorList>
    </citation>
    <scope>FUNCTION</scope>
    <scope>INTERACTION WITH SOCS7</scope>
</reference>
<reference key="11">
    <citation type="journal article" date="2007" name="J. Biochem. Mol. Biol.">
        <title>SEPT12 interacts with SEPT6 and this interaction alters the filament structure of SEPT6 in Hela cells.</title>
        <authorList>
            <person name="Ding X."/>
            <person name="Yu W."/>
            <person name="Liu M."/>
            <person name="Shen S."/>
            <person name="Chen F."/>
            <person name="Wan B."/>
            <person name="Yu L."/>
        </authorList>
    </citation>
    <scope>INTERACTION WITH SEPTIN12</scope>
</reference>
<reference key="12">
    <citation type="journal article" date="2007" name="J. Virol.">
        <title>An RNA-binding protein, hnRNP A1, and a scaffold protein, septin 6, facilitate hepatitis C virus replication.</title>
        <authorList>
            <person name="Kim C.S."/>
            <person name="Seol S.K."/>
            <person name="Song O.-K."/>
            <person name="Park J.H."/>
            <person name="Jang S.K."/>
        </authorList>
    </citation>
    <scope>INTERACTION WITH HNRNPA1 AND HCV NS5B (MICROBIAL INFECTION)</scope>
    <scope>FUNCTION</scope>
</reference>
<reference key="13">
    <citation type="journal article" date="2007" name="Science">
        <title>ATM and ATR substrate analysis reveals extensive protein networks responsive to DNA damage.</title>
        <authorList>
            <person name="Matsuoka S."/>
            <person name="Ballif B.A."/>
            <person name="Smogorzewska A."/>
            <person name="McDonald E.R. III"/>
            <person name="Hurov K.E."/>
            <person name="Luo J."/>
            <person name="Bakalarski C.E."/>
            <person name="Zhao Z."/>
            <person name="Solimini N."/>
            <person name="Lerenthal Y."/>
            <person name="Shiloh Y."/>
            <person name="Gygi S.P."/>
            <person name="Elledge S.J."/>
        </authorList>
    </citation>
    <scope>IDENTIFICATION BY MASS SPECTROMETRY [LARGE SCALE ANALYSIS]</scope>
    <source>
        <tissue>Embryonic kidney</tissue>
    </source>
</reference>
<reference key="14">
    <citation type="journal article" date="2009" name="Anal. Chem.">
        <title>Lys-N and trypsin cover complementary parts of the phosphoproteome in a refined SCX-based approach.</title>
        <authorList>
            <person name="Gauci S."/>
            <person name="Helbig A.O."/>
            <person name="Slijper M."/>
            <person name="Krijgsveld J."/>
            <person name="Heck A.J."/>
            <person name="Mohammed S."/>
        </authorList>
    </citation>
    <scope>ACETYLATION [LARGE SCALE ANALYSIS] AT ALA-2</scope>
    <scope>CLEAVAGE OF INITIATOR METHIONINE [LARGE SCALE ANALYSIS]</scope>
    <scope>IDENTIFICATION BY MASS SPECTROMETRY [LARGE SCALE ANALYSIS]</scope>
</reference>
<reference key="15">
    <citation type="journal article" date="2009" name="PLoS ONE">
        <title>Septins regulate bacterial entry into host cells.</title>
        <authorList>
            <person name="Mostowy S."/>
            <person name="Nam Tham T."/>
            <person name="Danckaert A."/>
            <person name="Guadagnini S."/>
            <person name="Boisson-Dupuis S."/>
            <person name="Pizarro-Cerda J."/>
            <person name="Cossart P."/>
        </authorList>
    </citation>
    <scope>INTERACTION WITH SEPTIN9</scope>
</reference>
<reference key="16">
    <citation type="journal article" date="2009" name="Science">
        <title>Lysine acetylation targets protein complexes and co-regulates major cellular functions.</title>
        <authorList>
            <person name="Choudhary C."/>
            <person name="Kumar C."/>
            <person name="Gnad F."/>
            <person name="Nielsen M.L."/>
            <person name="Rehman M."/>
            <person name="Walther T.C."/>
            <person name="Olsen J.V."/>
            <person name="Mann M."/>
        </authorList>
    </citation>
    <scope>ACETYLATION [LARGE SCALE ANALYSIS] AT LYS-367</scope>
    <scope>IDENTIFICATION BY MASS SPECTROMETRY [LARGE SCALE ANALYSIS]</scope>
</reference>
<reference key="17">
    <citation type="journal article" date="2011" name="BMC Syst. Biol.">
        <title>Initial characterization of the human central proteome.</title>
        <authorList>
            <person name="Burkard T.R."/>
            <person name="Planyavsky M."/>
            <person name="Kaupe I."/>
            <person name="Breitwieser F.P."/>
            <person name="Buerckstuemmer T."/>
            <person name="Bennett K.L."/>
            <person name="Superti-Furga G."/>
            <person name="Colinge J."/>
        </authorList>
    </citation>
    <scope>IDENTIFICATION BY MASS SPECTROMETRY [LARGE SCALE ANALYSIS]</scope>
</reference>
<reference key="18">
    <citation type="journal article" date="2013" name="J. Proteome Res.">
        <title>Toward a comprehensive characterization of a human cancer cell phosphoproteome.</title>
        <authorList>
            <person name="Zhou H."/>
            <person name="Di Palma S."/>
            <person name="Preisinger C."/>
            <person name="Peng M."/>
            <person name="Polat A.N."/>
            <person name="Heck A.J."/>
            <person name="Mohammed S."/>
        </authorList>
    </citation>
    <scope>PHOSPHORYLATION [LARGE SCALE ANALYSIS] AT SER-27; SER-416 AND THR-418</scope>
    <scope>IDENTIFICATION BY MASS SPECTROMETRY [LARGE SCALE ANALYSIS]</scope>
    <source>
        <tissue>Cervix carcinoma</tissue>
        <tissue>Erythroleukemia</tissue>
    </source>
</reference>
<reference key="19">
    <citation type="journal article" date="2014" name="J. Proteomics">
        <title>An enzyme assisted RP-RPLC approach for in-depth analysis of human liver phosphoproteome.</title>
        <authorList>
            <person name="Bian Y."/>
            <person name="Song C."/>
            <person name="Cheng K."/>
            <person name="Dong M."/>
            <person name="Wang F."/>
            <person name="Huang J."/>
            <person name="Sun D."/>
            <person name="Wang L."/>
            <person name="Ye M."/>
            <person name="Zou H."/>
        </authorList>
    </citation>
    <scope>IDENTIFICATION BY MASS SPECTROMETRY [LARGE SCALE ANALYSIS]</scope>
    <source>
        <tissue>Liver</tissue>
    </source>
</reference>
<reference key="20">
    <citation type="journal article" date="2015" name="J. Cell Sci.">
        <title>SEPT12 orchestrates the formation of mammalian sperm annulus by organizing core octomeric complexes with other SEPT proteins.</title>
        <authorList>
            <person name="Kuo Y.C."/>
            <person name="Shen Y.R."/>
            <person name="Chen H.I."/>
            <person name="Lin Y.H."/>
            <person name="Wang Y.Y."/>
            <person name="Chen Y.R."/>
            <person name="Wang C.Y."/>
            <person name="Kuo P.L."/>
        </authorList>
    </citation>
    <scope>FUNCTION</scope>
    <scope>SUBUNIT</scope>
    <scope>SUBCELLULAR LOCATION</scope>
</reference>
<reference key="21">
    <citation type="journal article" date="2015" name="Proteomics">
        <title>N-terminome analysis of the human mitochondrial proteome.</title>
        <authorList>
            <person name="Vaca Jacome A.S."/>
            <person name="Rabilloud T."/>
            <person name="Schaeffer-Reiss C."/>
            <person name="Rompais M."/>
            <person name="Ayoub D."/>
            <person name="Lane L."/>
            <person name="Bairoch A."/>
            <person name="Van Dorsselaer A."/>
            <person name="Carapito C."/>
        </authorList>
    </citation>
    <scope>IDENTIFICATION BY MASS SPECTROMETRY [LARGE SCALE ANALYSIS]</scope>
</reference>
<reference key="22">
    <citation type="journal article" date="2007" name="Nature">
        <title>Structural insight into filament formation by mammalian septins.</title>
        <authorList>
            <person name="Sirajuddin M."/>
            <person name="Farkasovsky M."/>
            <person name="Hauer F."/>
            <person name="Kuehlmann D."/>
            <person name="Macara I.G."/>
            <person name="Weyand M."/>
            <person name="Stark H."/>
            <person name="Wittinghofer A."/>
        </authorList>
    </citation>
    <scope>X-RAY CRYSTALLOGRAPHY (4.0 ANGSTROMS) OF 1-427 IN COMPLEX WITH GTP</scope>
    <scope>ELECTRON MICROSCOPY OF SEPTIN COMPLEX</scope>
    <scope>SUBUNIT</scope>
</reference>
<name>SEPT6_HUMAN</name>
<organism>
    <name type="scientific">Homo sapiens</name>
    <name type="common">Human</name>
    <dbReference type="NCBI Taxonomy" id="9606"/>
    <lineage>
        <taxon>Eukaryota</taxon>
        <taxon>Metazoa</taxon>
        <taxon>Chordata</taxon>
        <taxon>Craniata</taxon>
        <taxon>Vertebrata</taxon>
        <taxon>Euteleostomi</taxon>
        <taxon>Mammalia</taxon>
        <taxon>Eutheria</taxon>
        <taxon>Euarchontoglires</taxon>
        <taxon>Primates</taxon>
        <taxon>Haplorrhini</taxon>
        <taxon>Catarrhini</taxon>
        <taxon>Hominidae</taxon>
        <taxon>Homo</taxon>
    </lineage>
</organism>
<comment type="function">
    <text evidence="9 11 19">Filament-forming cytoskeletal GTPase. Required for normal organization of the actin cytoskeleton. Involved in cytokinesis. May play a role in HCV RNA replication. Forms a filamentous structure with SEPTIN12, SEPTIN6, SEPTIN2 and probably SEPTIN4 at the sperm annulus which is required for the structural integrity and motility of the sperm tail during postmeiotic differentiation (PubMed:25588830).</text>
</comment>
<comment type="subunit">
    <text evidence="8 9 10 11 12 13 14">Septins polymerize into heterooligomeric protein complexes that form filaments, and associate with cellular membranes, actin filaments and microtubules. GTPase activity is required for filament formation. Filaments are assembled from asymmetrical heterotrimers, composed of SEPTIN2, SEPTIN6 and SEPTIN7 that associate head-to-head to form a hexameric unit. Within the trimer, directly interacts with SEPTIN2 and SEPTIN7. Also interacts with SEPTIN9 and SEPTIN12. Interaction with SEPTIN12 alters filament structure. Component of a septin core octameric complex consisting of SEPTIN12, SEPTIN7, SEPTIN6 and SEPTIN2 or SEPTIN4 in the order 12-7-6-2-2-6-7-12 or 12-7-6-4-4-6-7-12 and located in the sperm annulus. Interacts with SOCS7. Interacts with HNRNPA1.</text>
</comment>
<comment type="subunit">
    <text evidence="9">(Microbial infection) Interacts with HCV NS5B.</text>
</comment>
<comment type="interaction">
    <interactant intactId="EBI-745901">
        <id>Q14141</id>
    </interactant>
    <interactant intactId="EBI-13307975">
        <id>O00213-2</id>
        <label>APBB1</label>
    </interactant>
    <organismsDiffer>false</organismsDiffer>
    <experiments>3</experiments>
</comment>
<comment type="interaction">
    <interactant intactId="EBI-745901">
        <id>Q14141</id>
    </interactant>
    <interactant intactId="EBI-10200977">
        <id>P21964-2</id>
        <label>COMT</label>
    </interactant>
    <organismsDiffer>false</organismsDiffer>
    <experiments>3</experiments>
</comment>
<comment type="interaction">
    <interactant intactId="EBI-745901">
        <id>Q14141</id>
    </interactant>
    <interactant intactId="EBI-747754">
        <id>P28799</id>
        <label>GRN</label>
    </interactant>
    <organismsDiffer>false</organismsDiffer>
    <experiments>3</experiments>
</comment>
<comment type="interaction">
    <interactant intactId="EBI-745901">
        <id>Q14141</id>
    </interactant>
    <interactant intactId="EBI-352662">
        <id>P09651</id>
        <label>HNRNPA1</label>
    </interactant>
    <organismsDiffer>false</organismsDiffer>
    <experiments>3</experiments>
</comment>
<comment type="interaction">
    <interactant intactId="EBI-745901">
        <id>Q14141</id>
    </interactant>
    <interactant intactId="EBI-466029">
        <id>P42858</id>
        <label>HTT</label>
    </interactant>
    <organismsDiffer>false</organismsDiffer>
    <experiments>18</experiments>
</comment>
<comment type="interaction">
    <interactant intactId="EBI-745901">
        <id>Q14141</id>
    </interactant>
    <interactant intactId="EBI-399080">
        <id>Q92993</id>
        <label>KAT5</label>
    </interactant>
    <organismsDiffer>false</organismsDiffer>
    <experiments>3</experiments>
</comment>
<comment type="interaction">
    <interactant intactId="EBI-745901">
        <id>Q14141</id>
    </interactant>
    <interactant intactId="EBI-11742507">
        <id>Q8TAP4-4</id>
        <label>LMO3</label>
    </interactant>
    <organismsDiffer>false</organismsDiffer>
    <experiments>3</experiments>
</comment>
<comment type="interaction">
    <interactant intactId="EBI-745901">
        <id>Q14141</id>
    </interactant>
    <interactant intactId="EBI-10269566">
        <id>Q8NDC4</id>
        <label>MORN4</label>
    </interactant>
    <organismsDiffer>false</organismsDiffer>
    <experiments>6</experiments>
</comment>
<comment type="interaction">
    <interactant intactId="EBI-745901">
        <id>Q14141</id>
    </interactant>
    <interactant intactId="EBI-493507">
        <id>P04150</id>
        <label>NR3C1</label>
    </interactant>
    <organismsDiffer>false</organismsDiffer>
    <experiments>3</experiments>
</comment>
<comment type="interaction">
    <interactant intactId="EBI-745901">
        <id>Q14141</id>
    </interactant>
    <interactant intactId="EBI-742388">
        <id>Q9H8W4</id>
        <label>PLEKHF2</label>
    </interactant>
    <organismsDiffer>false</organismsDiffer>
    <experiments>3</experiments>
</comment>
<comment type="interaction">
    <interactant intactId="EBI-745901">
        <id>Q14141</id>
    </interactant>
    <interactant intactId="EBI-1383528">
        <id>P17252</id>
        <label>PRKCA</label>
    </interactant>
    <organismsDiffer>false</organismsDiffer>
    <experiments>3</experiments>
</comment>
<comment type="interaction">
    <interactant intactId="EBI-745901">
        <id>Q14141</id>
    </interactant>
    <interactant intactId="EBI-16437910">
        <id>A0A0S2Z5W9</id>
        <label>SEPT9</label>
    </interactant>
    <organismsDiffer>false</organismsDiffer>
    <experiments>3</experiments>
</comment>
<comment type="interaction">
    <interactant intactId="EBI-745901">
        <id>Q14141</id>
    </interactant>
    <interactant intactId="EBI-693002">
        <id>Q8WYJ6</id>
        <label>SEPTIN1</label>
    </interactant>
    <organismsDiffer>false</organismsDiffer>
    <experiments>11</experiments>
</comment>
<comment type="interaction">
    <interactant intactId="EBI-745901">
        <id>Q14141</id>
    </interactant>
    <interactant intactId="EBI-2585067">
        <id>Q8IYM1</id>
        <label>SEPTIN12</label>
    </interactant>
    <organismsDiffer>false</organismsDiffer>
    <experiments>16</experiments>
</comment>
<comment type="interaction">
    <interactant intactId="EBI-745901">
        <id>Q14141</id>
    </interactant>
    <interactant intactId="EBI-741220">
        <id>Q15019</id>
        <label>SEPTIN2</label>
    </interactant>
    <organismsDiffer>false</organismsDiffer>
    <experiments>15</experiments>
</comment>
<comment type="interaction">
    <interactant intactId="EBI-745901">
        <id>Q14141</id>
    </interactant>
    <interactant intactId="EBI-727037">
        <id>Q9UH03</id>
        <label>SEPTIN3</label>
    </interactant>
    <organismsDiffer>false</organismsDiffer>
    <experiments>7</experiments>
</comment>
<comment type="interaction">
    <interactant intactId="EBI-745901">
        <id>Q14141</id>
    </interactant>
    <interactant intactId="EBI-373345">
        <id>Q99719</id>
        <label>SEPTIN5</label>
    </interactant>
    <organismsDiffer>false</organismsDiffer>
    <experiments>11</experiments>
</comment>
<comment type="interaction">
    <interactant intactId="EBI-745901">
        <id>Q14141</id>
    </interactant>
    <interactant intactId="EBI-2009373">
        <id>Q16181</id>
        <label>SEPTIN7</label>
    </interactant>
    <organismsDiffer>false</organismsDiffer>
    <experiments>7</experiments>
</comment>
<comment type="interaction">
    <interactant intactId="EBI-745901">
        <id>Q14141</id>
    </interactant>
    <interactant intactId="EBI-851542">
        <id>Q9UHD8</id>
        <label>SEPTIN9</label>
    </interactant>
    <organismsDiffer>false</organismsDiffer>
    <experiments>8</experiments>
</comment>
<comment type="interaction">
    <interactant intactId="EBI-745901">
        <id>Q14141</id>
    </interactant>
    <interactant intactId="EBI-9090795">
        <id>Q15047-2</id>
        <label>SETDB1</label>
    </interactant>
    <organismsDiffer>false</organismsDiffer>
    <experiments>3</experiments>
</comment>
<comment type="interaction">
    <interactant intactId="EBI-745901">
        <id>Q14141</id>
    </interactant>
    <interactant intactId="EBI-1539617">
        <id>O14512-1</id>
        <label>SOCS7</label>
    </interactant>
    <organismsDiffer>false</organismsDiffer>
    <experiments>2</experiments>
</comment>
<comment type="interaction">
    <interactant intactId="EBI-745901">
        <id>Q14141</id>
    </interactant>
    <interactant intactId="EBI-25842075">
        <id>P21980-2</id>
        <label>TGM2</label>
    </interactant>
    <organismsDiffer>false</organismsDiffer>
    <experiments>3</experiments>
</comment>
<comment type="interaction">
    <interactant intactId="EBI-745901">
        <id>Q14141</id>
    </interactant>
    <interactant intactId="EBI-720609">
        <id>O76024</id>
        <label>WFS1</label>
    </interactant>
    <organismsDiffer>false</organismsDiffer>
    <experiments>3</experiments>
</comment>
<comment type="interaction">
    <interactant intactId="EBI-745901">
        <id>Q14141</id>
    </interactant>
    <interactant intactId="EBI-359832">
        <id>P61981</id>
        <label>YWHAG</label>
    </interactant>
    <organismsDiffer>false</organismsDiffer>
    <experiments>3</experiments>
</comment>
<comment type="interaction">
    <interactant intactId="EBI-745901">
        <id>Q14141</id>
    </interactant>
    <interactant intactId="EBI-6904388">
        <id>PRO_0000037577</id>
        <dbReference type="UniProtKB" id="P27958"/>
    </interactant>
    <organismsDiffer>true</organismsDiffer>
    <experiments>4</experiments>
</comment>
<comment type="subcellular location">
    <subcellularLocation>
        <location evidence="6">Cytoplasm</location>
    </subcellularLocation>
    <subcellularLocation>
        <location evidence="6">Cytoplasm</location>
        <location evidence="6">Cytoskeleton</location>
        <location evidence="6">Spindle</location>
    </subcellularLocation>
    <subcellularLocation>
        <location evidence="6">Chromosome</location>
        <location evidence="6">Centromere</location>
        <location evidence="6">Kinetochore</location>
    </subcellularLocation>
    <subcellularLocation>
        <location evidence="6">Cleavage furrow</location>
    </subcellularLocation>
    <subcellularLocation>
        <location evidence="6">Midbody</location>
    </subcellularLocation>
    <subcellularLocation>
        <location evidence="14">Cell projection</location>
        <location evidence="14">Cilium</location>
        <location evidence="14">Flagellum</location>
    </subcellularLocation>
    <text evidence="14">In metaphase cells, localized within the microtubule spindle. At the metaphase plate, in close apposition to the kinetochores of the congressed chromosomes. In cells undergoing cytokinesis, localized to the midbody, the ingressing cleavage furrow, and the central spindle. Found in the sperm annulus (PubMed:25588830).</text>
</comment>
<comment type="alternative products">
    <event type="alternative splicing"/>
    <isoform>
        <id>Q14141-1</id>
        <name>II</name>
        <sequence type="displayed"/>
    </isoform>
    <isoform>
        <id>Q14141-2</id>
        <name>I</name>
        <name>III</name>
        <sequence type="described" ref="VSP_006053"/>
    </isoform>
    <isoform>
        <id>Q14141-3</id>
        <name>IV</name>
        <sequence type="described" ref="VSP_006051 VSP_006052"/>
    </isoform>
    <isoform>
        <id>Q14141-4</id>
        <name>V</name>
        <sequence type="described" ref="VSP_006054"/>
    </isoform>
</comment>
<comment type="tissue specificity">
    <text evidence="7">Widely expressed.</text>
</comment>
<comment type="miscellaneous">
    <text>Coordinated expression with SEPTIN2 and SEPTIN7.</text>
</comment>
<comment type="similarity">
    <text evidence="3">Belongs to the TRAFAC class TrmE-Era-EngA-EngB-Septin-like GTPase superfamily. Septin GTPase family.</text>
</comment>
<comment type="online information" name="Atlas of Genetics and Cytogenetics in Oncology and Haematology">
    <link uri="https://atlasgeneticsoncology.org/gene/376/SEPTIN6"/>
</comment>
<dbReference type="EMBL" id="AF403058">
    <property type="protein sequence ID" value="AAK98547.1"/>
    <property type="molecule type" value="mRNA"/>
</dbReference>
<dbReference type="EMBL" id="AF403059">
    <property type="protein sequence ID" value="AAK98548.1"/>
    <property type="molecule type" value="mRNA"/>
</dbReference>
<dbReference type="EMBL" id="AF403060">
    <property type="protein sequence ID" value="AAK98549.1"/>
    <property type="molecule type" value="mRNA"/>
</dbReference>
<dbReference type="EMBL" id="AF403061">
    <property type="protein sequence ID" value="AAK98550.1"/>
    <property type="molecule type" value="mRNA"/>
</dbReference>
<dbReference type="EMBL" id="AF403062">
    <property type="protein sequence ID" value="AAK98551.1"/>
    <property type="molecule type" value="mRNA"/>
</dbReference>
<dbReference type="EMBL" id="AC004913">
    <property type="status" value="NOT_ANNOTATED_CDS"/>
    <property type="molecule type" value="Genomic_DNA"/>
</dbReference>
<dbReference type="EMBL" id="AC005052">
    <property type="status" value="NOT_ANNOTATED_CDS"/>
    <property type="molecule type" value="Genomic_DNA"/>
</dbReference>
<dbReference type="EMBL" id="AL355348">
    <property type="status" value="NOT_ANNOTATED_CDS"/>
    <property type="molecule type" value="Genomic_DNA"/>
</dbReference>
<dbReference type="EMBL" id="BC009291">
    <property type="protein sequence ID" value="AAH09291.1"/>
    <property type="molecule type" value="mRNA"/>
</dbReference>
<dbReference type="EMBL" id="BC011922">
    <property type="protein sequence ID" value="AAH11922.3"/>
    <property type="molecule type" value="mRNA"/>
</dbReference>
<dbReference type="EMBL" id="BC036240">
    <property type="protein sequence ID" value="AAH36240.1"/>
    <property type="molecule type" value="mRNA"/>
</dbReference>
<dbReference type="EMBL" id="D50918">
    <property type="protein sequence ID" value="BAA09477.1"/>
    <property type="molecule type" value="mRNA"/>
</dbReference>
<dbReference type="CCDS" id="CCDS14583.1">
    <molecule id="Q14141-4"/>
</dbReference>
<dbReference type="CCDS" id="CCDS14584.1">
    <molecule id="Q14141-1"/>
</dbReference>
<dbReference type="CCDS" id="CCDS14585.1">
    <molecule id="Q14141-2"/>
</dbReference>
<dbReference type="RefSeq" id="NP_055944.2">
    <molecule id="Q14141-1"/>
    <property type="nucleotide sequence ID" value="NM_015129.5"/>
</dbReference>
<dbReference type="RefSeq" id="NP_665798.1">
    <molecule id="Q14141-2"/>
    <property type="nucleotide sequence ID" value="NM_145799.4"/>
</dbReference>
<dbReference type="RefSeq" id="NP_665799.1">
    <molecule id="Q14141-2"/>
    <property type="nucleotide sequence ID" value="NM_145800.4"/>
</dbReference>
<dbReference type="RefSeq" id="NP_665801.1">
    <molecule id="Q14141-4"/>
    <property type="nucleotide sequence ID" value="NM_145802.4"/>
</dbReference>
<dbReference type="RefSeq" id="XP_006724813.1">
    <property type="nucleotide sequence ID" value="XM_006724750.2"/>
</dbReference>
<dbReference type="RefSeq" id="XP_054182705.1">
    <molecule id="Q14141-1"/>
    <property type="nucleotide sequence ID" value="XM_054326730.1"/>
</dbReference>
<dbReference type="PDB" id="2QAG">
    <property type="method" value="X-ray"/>
    <property type="resolution" value="4.00 A"/>
    <property type="chains" value="B=1-427"/>
</dbReference>
<dbReference type="PDB" id="6UPA">
    <property type="method" value="X-ray"/>
    <property type="resolution" value="2.51 A"/>
    <property type="chains" value="B=40-305"/>
</dbReference>
<dbReference type="PDB" id="6WBP">
    <property type="method" value="X-ray"/>
    <property type="resolution" value="1.80 A"/>
    <property type="chains" value="A/B=347-399"/>
</dbReference>
<dbReference type="PDB" id="7M6J">
    <property type="method" value="EM"/>
    <property type="resolution" value="3.60 A"/>
    <property type="chains" value="B/E=1-427"/>
</dbReference>
<dbReference type="PDBsum" id="2QAG"/>
<dbReference type="PDBsum" id="6UPA"/>
<dbReference type="PDBsum" id="6WBP"/>
<dbReference type="PDBsum" id="7M6J"/>
<dbReference type="EMDB" id="EMD-23698"/>
<dbReference type="SASBDB" id="Q14141"/>
<dbReference type="SMR" id="Q14141"/>
<dbReference type="BioGRID" id="116770">
    <property type="interactions" value="89"/>
</dbReference>
<dbReference type="ComplexPortal" id="CPX-25758">
    <property type="entry name" value="Septin complex, octamer variant, SEPT2-SEPT6-SEPT-7-SEPT9"/>
</dbReference>
<dbReference type="ComplexPortal" id="CPX-25761">
    <property type="entry name" value="Septin complex, octamer variant, SEPT2-SEPT6-SEPT-7-SEPT3"/>
</dbReference>
<dbReference type="ComplexPortal" id="CPX-25766">
    <property type="entry name" value="Septin complex, hexamer variant, SEPT2-SEPT6-SEPT-7"/>
</dbReference>
<dbReference type="DIP" id="DIP-38218N"/>
<dbReference type="FunCoup" id="Q14141">
    <property type="interactions" value="485"/>
</dbReference>
<dbReference type="IntAct" id="Q14141">
    <property type="interactions" value="65"/>
</dbReference>
<dbReference type="MINT" id="Q14141"/>
<dbReference type="STRING" id="9606.ENSP00000341524"/>
<dbReference type="GlyGen" id="Q14141">
    <property type="glycosylation" value="1 site, 1 O-linked glycan (1 site)"/>
</dbReference>
<dbReference type="iPTMnet" id="Q14141"/>
<dbReference type="MetOSite" id="Q14141"/>
<dbReference type="PhosphoSitePlus" id="Q14141"/>
<dbReference type="SwissPalm" id="Q14141"/>
<dbReference type="BioMuta" id="SEPT6"/>
<dbReference type="DMDM" id="20178343"/>
<dbReference type="OGP" id="Q14141"/>
<dbReference type="jPOST" id="Q14141"/>
<dbReference type="MassIVE" id="Q14141"/>
<dbReference type="PaxDb" id="9606-ENSP00000341524"/>
<dbReference type="PeptideAtlas" id="Q14141"/>
<dbReference type="ProteomicsDB" id="59843">
    <molecule id="Q14141-1"/>
</dbReference>
<dbReference type="ProteomicsDB" id="59844">
    <molecule id="Q14141-2"/>
</dbReference>
<dbReference type="ProteomicsDB" id="59845">
    <molecule id="Q14141-3"/>
</dbReference>
<dbReference type="ProteomicsDB" id="59846">
    <molecule id="Q14141-4"/>
</dbReference>
<dbReference type="Pumba" id="Q14141"/>
<dbReference type="Antibodypedia" id="465">
    <property type="antibodies" value="292 antibodies from 35 providers"/>
</dbReference>
<dbReference type="DNASU" id="23157"/>
<dbReference type="Ensembl" id="ENST00000343984.5">
    <molecule id="Q14141-1"/>
    <property type="protein sequence ID" value="ENSP00000341524.5"/>
    <property type="gene ID" value="ENSG00000125354.24"/>
</dbReference>
<dbReference type="Ensembl" id="ENST00000354228.8">
    <molecule id="Q14141-4"/>
    <property type="protein sequence ID" value="ENSP00000346169.4"/>
    <property type="gene ID" value="ENSG00000125354.24"/>
</dbReference>
<dbReference type="Ensembl" id="ENST00000360156.11">
    <molecule id="Q14141-2"/>
    <property type="protein sequence ID" value="ENSP00000353278.7"/>
    <property type="gene ID" value="ENSG00000125354.24"/>
</dbReference>
<dbReference type="Ensembl" id="ENST00000394610.7">
    <molecule id="Q14141-2"/>
    <property type="protein sequence ID" value="ENSP00000378108.1"/>
    <property type="gene ID" value="ENSG00000125354.24"/>
</dbReference>
<dbReference type="Ensembl" id="ENST00000460411.5">
    <molecule id="Q14141-3"/>
    <property type="protein sequence ID" value="ENSP00000435818.1"/>
    <property type="gene ID" value="ENSG00000125354.24"/>
</dbReference>
<dbReference type="Ensembl" id="ENST00000489216.5">
    <molecule id="Q14141-2"/>
    <property type="protein sequence ID" value="ENSP00000418715.1"/>
    <property type="gene ID" value="ENSG00000125354.24"/>
</dbReference>
<dbReference type="GeneID" id="23157"/>
<dbReference type="KEGG" id="hsa:23157"/>
<dbReference type="MANE-Select" id="ENST00000394610.7">
    <molecule id="Q14141-2"/>
    <property type="protein sequence ID" value="ENSP00000378108.1"/>
    <property type="RefSeq nucleotide sequence ID" value="NM_145799.4"/>
    <property type="RefSeq protein sequence ID" value="NP_665798.1"/>
</dbReference>
<dbReference type="UCSC" id="uc004erv.4">
    <molecule id="Q14141-1"/>
    <property type="organism name" value="human"/>
</dbReference>
<dbReference type="AGR" id="HGNC:15848"/>
<dbReference type="CTD" id="23157"/>
<dbReference type="DisGeNET" id="23157"/>
<dbReference type="GeneCards" id="SEPTIN6"/>
<dbReference type="HGNC" id="HGNC:15848">
    <property type="gene designation" value="SEPTIN6"/>
</dbReference>
<dbReference type="HPA" id="ENSG00000125354">
    <property type="expression patterns" value="Tissue enhanced (lymphoid)"/>
</dbReference>
<dbReference type="MIM" id="300683">
    <property type="type" value="gene"/>
</dbReference>
<dbReference type="neXtProt" id="NX_Q14141"/>
<dbReference type="OpenTargets" id="ENSG00000125354"/>
<dbReference type="PharmGKB" id="PA134941944"/>
<dbReference type="VEuPathDB" id="HostDB:ENSG00000125354"/>
<dbReference type="eggNOG" id="KOG3859">
    <property type="taxonomic scope" value="Eukaryota"/>
</dbReference>
<dbReference type="GeneTree" id="ENSGT00940000158026"/>
<dbReference type="HOGENOM" id="CLU_017718_8_1_1"/>
<dbReference type="InParanoid" id="Q14141"/>
<dbReference type="OMA" id="TSEGWAI"/>
<dbReference type="OrthoDB" id="416553at2759"/>
<dbReference type="PAN-GO" id="Q14141">
    <property type="GO annotations" value="9 GO annotations based on evolutionary models"/>
</dbReference>
<dbReference type="PhylomeDB" id="Q14141"/>
<dbReference type="TreeFam" id="TF101080"/>
<dbReference type="PathwayCommons" id="Q14141"/>
<dbReference type="SignaLink" id="Q14141"/>
<dbReference type="SIGNOR" id="Q14141"/>
<dbReference type="BioGRID-ORCS" id="23157">
    <property type="hits" value="11 hits in 703 CRISPR screens"/>
</dbReference>
<dbReference type="CD-CODE" id="FB4E32DD">
    <property type="entry name" value="Presynaptic clusters and postsynaptic densities"/>
</dbReference>
<dbReference type="ChiTaRS" id="SEPT6">
    <property type="organism name" value="human"/>
</dbReference>
<dbReference type="EvolutionaryTrace" id="Q14141"/>
<dbReference type="GeneWiki" id="SEPT6"/>
<dbReference type="GenomeRNAi" id="23157"/>
<dbReference type="Pharos" id="Q14141">
    <property type="development level" value="Tbio"/>
</dbReference>
<dbReference type="PRO" id="PR:Q14141"/>
<dbReference type="Proteomes" id="UP000005640">
    <property type="component" value="Chromosome X"/>
</dbReference>
<dbReference type="RNAct" id="Q14141">
    <property type="molecule type" value="protein"/>
</dbReference>
<dbReference type="Bgee" id="ENSG00000125354">
    <property type="expression patterns" value="Expressed in thymus and 200 other cell types or tissues"/>
</dbReference>
<dbReference type="ExpressionAtlas" id="Q14141">
    <property type="expression patterns" value="baseline and differential"/>
</dbReference>
<dbReference type="GO" id="GO:0043679">
    <property type="term" value="C:axon terminus"/>
    <property type="evidence" value="ECO:0007669"/>
    <property type="project" value="Ensembl"/>
</dbReference>
<dbReference type="GO" id="GO:0032153">
    <property type="term" value="C:cell division site"/>
    <property type="evidence" value="ECO:0000318"/>
    <property type="project" value="GO_Central"/>
</dbReference>
<dbReference type="GO" id="GO:0032154">
    <property type="term" value="C:cleavage furrow"/>
    <property type="evidence" value="ECO:0007669"/>
    <property type="project" value="UniProtKB-SubCell"/>
</dbReference>
<dbReference type="GO" id="GO:0000776">
    <property type="term" value="C:kinetochore"/>
    <property type="evidence" value="ECO:0007669"/>
    <property type="project" value="UniProtKB-KW"/>
</dbReference>
<dbReference type="GO" id="GO:0015630">
    <property type="term" value="C:microtubule cytoskeleton"/>
    <property type="evidence" value="ECO:0000318"/>
    <property type="project" value="GO_Central"/>
</dbReference>
<dbReference type="GO" id="GO:0030496">
    <property type="term" value="C:midbody"/>
    <property type="evidence" value="ECO:0007669"/>
    <property type="project" value="UniProtKB-SubCell"/>
</dbReference>
<dbReference type="GO" id="GO:0032173">
    <property type="term" value="C:septin collar"/>
    <property type="evidence" value="ECO:0007669"/>
    <property type="project" value="Ensembl"/>
</dbReference>
<dbReference type="GO" id="GO:0031105">
    <property type="term" value="C:septin complex"/>
    <property type="evidence" value="ECO:0000314"/>
    <property type="project" value="UniProtKB"/>
</dbReference>
<dbReference type="GO" id="GO:0005940">
    <property type="term" value="C:septin ring"/>
    <property type="evidence" value="ECO:0000318"/>
    <property type="project" value="GO_Central"/>
</dbReference>
<dbReference type="GO" id="GO:0097227">
    <property type="term" value="C:sperm annulus"/>
    <property type="evidence" value="ECO:0000314"/>
    <property type="project" value="UniProtKB"/>
</dbReference>
<dbReference type="GO" id="GO:0005819">
    <property type="term" value="C:spindle"/>
    <property type="evidence" value="ECO:0007669"/>
    <property type="project" value="UniProtKB-SubCell"/>
</dbReference>
<dbReference type="GO" id="GO:0008021">
    <property type="term" value="C:synaptic vesicle"/>
    <property type="evidence" value="ECO:0007669"/>
    <property type="project" value="Ensembl"/>
</dbReference>
<dbReference type="GO" id="GO:0005525">
    <property type="term" value="F:GTP binding"/>
    <property type="evidence" value="ECO:0000304"/>
    <property type="project" value="UniProtKB"/>
</dbReference>
<dbReference type="GO" id="GO:0003924">
    <property type="term" value="F:GTPase activity"/>
    <property type="evidence" value="ECO:0000318"/>
    <property type="project" value="GO_Central"/>
</dbReference>
<dbReference type="GO" id="GO:0060090">
    <property type="term" value="F:molecular adaptor activity"/>
    <property type="evidence" value="ECO:0000318"/>
    <property type="project" value="GO_Central"/>
</dbReference>
<dbReference type="GO" id="GO:0030154">
    <property type="term" value="P:cell differentiation"/>
    <property type="evidence" value="ECO:0007669"/>
    <property type="project" value="UniProtKB-KW"/>
</dbReference>
<dbReference type="GO" id="GO:0061640">
    <property type="term" value="P:cytoskeleton-dependent cytokinesis"/>
    <property type="evidence" value="ECO:0000318"/>
    <property type="project" value="GO_Central"/>
</dbReference>
<dbReference type="GO" id="GO:0000281">
    <property type="term" value="P:mitotic cytokinesis"/>
    <property type="evidence" value="ECO:0000304"/>
    <property type="project" value="UniProtKB"/>
</dbReference>
<dbReference type="GO" id="GO:0008104">
    <property type="term" value="P:protein localization"/>
    <property type="evidence" value="ECO:0000318"/>
    <property type="project" value="GO_Central"/>
</dbReference>
<dbReference type="GO" id="GO:0007283">
    <property type="term" value="P:spermatogenesis"/>
    <property type="evidence" value="ECO:0007669"/>
    <property type="project" value="UniProtKB-KW"/>
</dbReference>
<dbReference type="CDD" id="cd01850">
    <property type="entry name" value="CDC_Septin"/>
    <property type="match status" value="1"/>
</dbReference>
<dbReference type="FunFam" id="3.40.50.300:FF:000036">
    <property type="entry name" value="septin-6 isoform X2"/>
    <property type="match status" value="1"/>
</dbReference>
<dbReference type="Gene3D" id="3.40.50.300">
    <property type="entry name" value="P-loop containing nucleotide triphosphate hydrolases"/>
    <property type="match status" value="1"/>
</dbReference>
<dbReference type="InterPro" id="IPR030379">
    <property type="entry name" value="G_SEPTIN_dom"/>
</dbReference>
<dbReference type="InterPro" id="IPR027417">
    <property type="entry name" value="P-loop_NTPase"/>
</dbReference>
<dbReference type="InterPro" id="IPR016491">
    <property type="entry name" value="Septin"/>
</dbReference>
<dbReference type="PANTHER" id="PTHR18884">
    <property type="entry name" value="SEPTIN"/>
    <property type="match status" value="1"/>
</dbReference>
<dbReference type="Pfam" id="PF00735">
    <property type="entry name" value="Septin"/>
    <property type="match status" value="1"/>
</dbReference>
<dbReference type="PIRSF" id="PIRSF006698">
    <property type="entry name" value="Septin"/>
    <property type="match status" value="1"/>
</dbReference>
<dbReference type="SUPFAM" id="SSF52540">
    <property type="entry name" value="P-loop containing nucleoside triphosphate hydrolases"/>
    <property type="match status" value="1"/>
</dbReference>
<dbReference type="PROSITE" id="PS51719">
    <property type="entry name" value="G_SEPTIN"/>
    <property type="match status" value="1"/>
</dbReference>
<keyword id="KW-0002">3D-structure</keyword>
<keyword id="KW-0007">Acetylation</keyword>
<keyword id="KW-0025">Alternative splicing</keyword>
<keyword id="KW-0131">Cell cycle</keyword>
<keyword id="KW-0132">Cell division</keyword>
<keyword id="KW-0966">Cell projection</keyword>
<keyword id="KW-0137">Centromere</keyword>
<keyword id="KW-0158">Chromosome</keyword>
<keyword id="KW-0969">Cilium</keyword>
<keyword id="KW-0175">Coiled coil</keyword>
<keyword id="KW-0963">Cytoplasm</keyword>
<keyword id="KW-0206">Cytoskeleton</keyword>
<keyword id="KW-0221">Differentiation</keyword>
<keyword id="KW-0903">Direct protein sequencing</keyword>
<keyword id="KW-0282">Flagellum</keyword>
<keyword id="KW-0342">GTP-binding</keyword>
<keyword id="KW-0945">Host-virus interaction</keyword>
<keyword id="KW-0995">Kinetochore</keyword>
<keyword id="KW-0547">Nucleotide-binding</keyword>
<keyword id="KW-0597">Phosphoprotein</keyword>
<keyword id="KW-1267">Proteomics identification</keyword>
<keyword id="KW-1185">Reference proteome</keyword>
<keyword id="KW-0744">Spermatogenesis</keyword>
<protein>
    <recommendedName>
        <fullName>Septin-6</fullName>
    </recommendedName>
</protein>
<evidence type="ECO:0000250" key="1"/>
<evidence type="ECO:0000255" key="2"/>
<evidence type="ECO:0000255" key="3">
    <source>
        <dbReference type="PROSITE-ProRule" id="PRU01056"/>
    </source>
</evidence>
<evidence type="ECO:0000256" key="4">
    <source>
        <dbReference type="SAM" id="MobiDB-lite"/>
    </source>
</evidence>
<evidence type="ECO:0000269" key="5">
    <source>
    </source>
</evidence>
<evidence type="ECO:0000269" key="6">
    <source>
    </source>
</evidence>
<evidence type="ECO:0000269" key="7">
    <source>
    </source>
</evidence>
<evidence type="ECO:0000269" key="8">
    <source>
    </source>
</evidence>
<evidence type="ECO:0000269" key="9">
    <source>
    </source>
</evidence>
<evidence type="ECO:0000269" key="10">
    <source>
    </source>
</evidence>
<evidence type="ECO:0000269" key="11">
    <source>
    </source>
</evidence>
<evidence type="ECO:0000269" key="12">
    <source>
    </source>
</evidence>
<evidence type="ECO:0000269" key="13">
    <source>
    </source>
</evidence>
<evidence type="ECO:0000269" key="14">
    <source>
    </source>
</evidence>
<evidence type="ECO:0000303" key="15">
    <source>
    </source>
</evidence>
<evidence type="ECO:0000303" key="16">
    <source>
    </source>
</evidence>
<evidence type="ECO:0000303" key="17">
    <source>
    </source>
</evidence>
<evidence type="ECO:0000305" key="18"/>
<evidence type="ECO:0000305" key="19">
    <source>
    </source>
</evidence>
<evidence type="ECO:0000312" key="20">
    <source>
        <dbReference type="HGNC" id="HGNC:15848"/>
    </source>
</evidence>
<evidence type="ECO:0007744" key="21">
    <source>
    </source>
</evidence>
<evidence type="ECO:0007744" key="22">
    <source>
    </source>
</evidence>
<evidence type="ECO:0007744" key="23">
    <source>
    </source>
</evidence>
<evidence type="ECO:0007829" key="24">
    <source>
        <dbReference type="PDB" id="6UPA"/>
    </source>
</evidence>
<evidence type="ECO:0007829" key="25">
    <source>
        <dbReference type="PDB" id="6WBP"/>
    </source>
</evidence>
<proteinExistence type="evidence at protein level"/>
<gene>
    <name evidence="20" type="primary">SEPTIN6</name>
    <name type="synonym">KIAA0128</name>
    <name type="synonym">SEP2</name>
    <name type="synonym">SEPT6</name>
</gene>